<gene>
    <name evidence="6" type="primary">Ebp</name>
    <name evidence="6" type="synonym">Peb</name>
    <name evidence="6" type="ORF">CG2668</name>
</gene>
<reference evidence="4" key="1">
    <citation type="journal article" date="2000" name="Science">
        <title>The genome sequence of Drosophila melanogaster.</title>
        <authorList>
            <person name="Adams M.D."/>
            <person name="Celniker S.E."/>
            <person name="Holt R.A."/>
            <person name="Evans C.A."/>
            <person name="Gocayne J.D."/>
            <person name="Amanatides P.G."/>
            <person name="Scherer S.E."/>
            <person name="Li P.W."/>
            <person name="Hoskins R.A."/>
            <person name="Galle R.F."/>
            <person name="George R.A."/>
            <person name="Lewis S.E."/>
            <person name="Richards S."/>
            <person name="Ashburner M."/>
            <person name="Henderson S.N."/>
            <person name="Sutton G.G."/>
            <person name="Wortman J.R."/>
            <person name="Yandell M.D."/>
            <person name="Zhang Q."/>
            <person name="Chen L.X."/>
            <person name="Brandon R.C."/>
            <person name="Rogers Y.-H.C."/>
            <person name="Blazej R.G."/>
            <person name="Champe M."/>
            <person name="Pfeiffer B.D."/>
            <person name="Wan K.H."/>
            <person name="Doyle C."/>
            <person name="Baxter E.G."/>
            <person name="Helt G."/>
            <person name="Nelson C.R."/>
            <person name="Miklos G.L.G."/>
            <person name="Abril J.F."/>
            <person name="Agbayani A."/>
            <person name="An H.-J."/>
            <person name="Andrews-Pfannkoch C."/>
            <person name="Baldwin D."/>
            <person name="Ballew R.M."/>
            <person name="Basu A."/>
            <person name="Baxendale J."/>
            <person name="Bayraktaroglu L."/>
            <person name="Beasley E.M."/>
            <person name="Beeson K.Y."/>
            <person name="Benos P.V."/>
            <person name="Berman B.P."/>
            <person name="Bhandari D."/>
            <person name="Bolshakov S."/>
            <person name="Borkova D."/>
            <person name="Botchan M.R."/>
            <person name="Bouck J."/>
            <person name="Brokstein P."/>
            <person name="Brottier P."/>
            <person name="Burtis K.C."/>
            <person name="Busam D.A."/>
            <person name="Butler H."/>
            <person name="Cadieu E."/>
            <person name="Center A."/>
            <person name="Chandra I."/>
            <person name="Cherry J.M."/>
            <person name="Cawley S."/>
            <person name="Dahlke C."/>
            <person name="Davenport L.B."/>
            <person name="Davies P."/>
            <person name="de Pablos B."/>
            <person name="Delcher A."/>
            <person name="Deng Z."/>
            <person name="Mays A.D."/>
            <person name="Dew I."/>
            <person name="Dietz S.M."/>
            <person name="Dodson K."/>
            <person name="Doup L.E."/>
            <person name="Downes M."/>
            <person name="Dugan-Rocha S."/>
            <person name="Dunkov B.C."/>
            <person name="Dunn P."/>
            <person name="Durbin K.J."/>
            <person name="Evangelista C.C."/>
            <person name="Ferraz C."/>
            <person name="Ferriera S."/>
            <person name="Fleischmann W."/>
            <person name="Fosler C."/>
            <person name="Gabrielian A.E."/>
            <person name="Garg N.S."/>
            <person name="Gelbart W.M."/>
            <person name="Glasser K."/>
            <person name="Glodek A."/>
            <person name="Gong F."/>
            <person name="Gorrell J.H."/>
            <person name="Gu Z."/>
            <person name="Guan P."/>
            <person name="Harris M."/>
            <person name="Harris N.L."/>
            <person name="Harvey D.A."/>
            <person name="Heiman T.J."/>
            <person name="Hernandez J.R."/>
            <person name="Houck J."/>
            <person name="Hostin D."/>
            <person name="Houston K.A."/>
            <person name="Howland T.J."/>
            <person name="Wei M.-H."/>
            <person name="Ibegwam C."/>
            <person name="Jalali M."/>
            <person name="Kalush F."/>
            <person name="Karpen G.H."/>
            <person name="Ke Z."/>
            <person name="Kennison J.A."/>
            <person name="Ketchum K.A."/>
            <person name="Kimmel B.E."/>
            <person name="Kodira C.D."/>
            <person name="Kraft C.L."/>
            <person name="Kravitz S."/>
            <person name="Kulp D."/>
            <person name="Lai Z."/>
            <person name="Lasko P."/>
            <person name="Lei Y."/>
            <person name="Levitsky A.A."/>
            <person name="Li J.H."/>
            <person name="Li Z."/>
            <person name="Liang Y."/>
            <person name="Lin X."/>
            <person name="Liu X."/>
            <person name="Mattei B."/>
            <person name="McIntosh T.C."/>
            <person name="McLeod M.P."/>
            <person name="McPherson D."/>
            <person name="Merkulov G."/>
            <person name="Milshina N.V."/>
            <person name="Mobarry C."/>
            <person name="Morris J."/>
            <person name="Moshrefi A."/>
            <person name="Mount S.M."/>
            <person name="Moy M."/>
            <person name="Murphy B."/>
            <person name="Murphy L."/>
            <person name="Muzny D.M."/>
            <person name="Nelson D.L."/>
            <person name="Nelson D.R."/>
            <person name="Nelson K.A."/>
            <person name="Nixon K."/>
            <person name="Nusskern D.R."/>
            <person name="Pacleb J.M."/>
            <person name="Palazzolo M."/>
            <person name="Pittman G.S."/>
            <person name="Pan S."/>
            <person name="Pollard J."/>
            <person name="Puri V."/>
            <person name="Reese M.G."/>
            <person name="Reinert K."/>
            <person name="Remington K."/>
            <person name="Saunders R.D.C."/>
            <person name="Scheeler F."/>
            <person name="Shen H."/>
            <person name="Shue B.C."/>
            <person name="Siden-Kiamos I."/>
            <person name="Simpson M."/>
            <person name="Skupski M.P."/>
            <person name="Smith T.J."/>
            <person name="Spier E."/>
            <person name="Spradling A.C."/>
            <person name="Stapleton M."/>
            <person name="Strong R."/>
            <person name="Sun E."/>
            <person name="Svirskas R."/>
            <person name="Tector C."/>
            <person name="Turner R."/>
            <person name="Venter E."/>
            <person name="Wang A.H."/>
            <person name="Wang X."/>
            <person name="Wang Z.-Y."/>
            <person name="Wassarman D.A."/>
            <person name="Weinstock G.M."/>
            <person name="Weissenbach J."/>
            <person name="Williams S.M."/>
            <person name="Woodage T."/>
            <person name="Worley K.C."/>
            <person name="Wu D."/>
            <person name="Yang S."/>
            <person name="Yao Q.A."/>
            <person name="Ye J."/>
            <person name="Yeh R.-F."/>
            <person name="Zaveri J.S."/>
            <person name="Zhan M."/>
            <person name="Zhang G."/>
            <person name="Zhao Q."/>
            <person name="Zheng L."/>
            <person name="Zheng X.H."/>
            <person name="Zhong F.N."/>
            <person name="Zhong W."/>
            <person name="Zhou X."/>
            <person name="Zhu S.C."/>
            <person name="Zhu X."/>
            <person name="Smith H.O."/>
            <person name="Gibbs R.A."/>
            <person name="Myers E.W."/>
            <person name="Rubin G.M."/>
            <person name="Venter J.C."/>
        </authorList>
    </citation>
    <scope>NUCLEOTIDE SEQUENCE [LARGE SCALE GENOMIC DNA]</scope>
    <source>
        <strain>Berkeley</strain>
    </source>
</reference>
<reference evidence="4" key="2">
    <citation type="journal article" date="2002" name="Genome Biol.">
        <title>Annotation of the Drosophila melanogaster euchromatic genome: a systematic review.</title>
        <authorList>
            <person name="Misra S."/>
            <person name="Crosby M.A."/>
            <person name="Mungall C.J."/>
            <person name="Matthews B.B."/>
            <person name="Campbell K.S."/>
            <person name="Hradecky P."/>
            <person name="Huang Y."/>
            <person name="Kaminker J.S."/>
            <person name="Millburn G.H."/>
            <person name="Prochnik S.E."/>
            <person name="Smith C.D."/>
            <person name="Tupy J.L."/>
            <person name="Whitfield E.J."/>
            <person name="Bayraktaroglu L."/>
            <person name="Berman B.P."/>
            <person name="Bettencourt B.R."/>
            <person name="Celniker S.E."/>
            <person name="de Grey A.D.N.J."/>
            <person name="Drysdale R.A."/>
            <person name="Harris N.L."/>
            <person name="Richter J."/>
            <person name="Russo S."/>
            <person name="Schroeder A.J."/>
            <person name="Shu S.Q."/>
            <person name="Stapleton M."/>
            <person name="Yamada C."/>
            <person name="Ashburner M."/>
            <person name="Gelbart W.M."/>
            <person name="Rubin G.M."/>
            <person name="Lewis S.E."/>
        </authorList>
    </citation>
    <scope>GENOME REANNOTATION</scope>
    <source>
        <strain>Berkeley</strain>
    </source>
</reference>
<reference evidence="4" key="3">
    <citation type="journal article" date="2000" name="Science">
        <title>A Drosophila complementary DNA resource.</title>
        <authorList>
            <person name="Rubin G.M."/>
            <person name="Hong L."/>
            <person name="Brokstein P."/>
            <person name="Evans-Holm M."/>
            <person name="Frise E."/>
            <person name="Stapleton M."/>
            <person name="Harvey D.A."/>
        </authorList>
    </citation>
    <scope>NUCLEOTIDE SEQUENCE [LARGE SCALE MRNA]</scope>
    <source>
        <strain>Berkeley</strain>
        <tissue>Head</tissue>
    </source>
</reference>
<reference evidence="4" key="4">
    <citation type="journal article" date="2001" name="Insect Biochem. Mol. Biol.">
        <title>Identification and characterization of the major Drosophila melanogaster mating plug protein.</title>
        <authorList>
            <person name="Lung O."/>
            <person name="Wolfner M.F."/>
        </authorList>
    </citation>
    <scope>PROTEIN SEQUENCE OF 77-90 AND 101-109</scope>
    <scope>FUNCTION</scope>
    <scope>SUBCELLULAR LOCATION</scope>
    <scope>TISSUE SPECIFICITY</scope>
    <source>
        <strain>Canton-S</strain>
    </source>
</reference>
<feature type="signal peptide" evidence="1">
    <location>
        <begin position="1"/>
        <end position="20"/>
    </location>
</feature>
<feature type="chain" id="PRO_0000022034" description="Ejaculatory bulb-specific protein 1">
    <location>
        <begin position="21"/>
        <end position="377"/>
    </location>
</feature>
<feature type="region of interest" description="Disordered" evidence="2">
    <location>
        <begin position="155"/>
        <end position="253"/>
    </location>
</feature>
<feature type="compositionally biased region" description="Pro residues" evidence="2">
    <location>
        <begin position="165"/>
        <end position="228"/>
    </location>
</feature>
<feature type="sequence conflict" description="In Ref. 4; AA sequence." evidence="4" ref="4">
    <original>G</original>
    <variation>GANILAG</variation>
    <location>
        <position position="84"/>
    </location>
</feature>
<dbReference type="EMBL" id="AE013599">
    <property type="protein sequence ID" value="AAF47319.2"/>
    <property type="molecule type" value="Genomic_DNA"/>
</dbReference>
<dbReference type="EMBL" id="AF184225">
    <property type="protein sequence ID" value="AAD55736.1"/>
    <property type="molecule type" value="mRNA"/>
</dbReference>
<dbReference type="RefSeq" id="NP_001261178.1">
    <property type="nucleotide sequence ID" value="NM_001274249.1"/>
</dbReference>
<dbReference type="RefSeq" id="NP_611995.1">
    <property type="nucleotide sequence ID" value="NM_138151.3"/>
</dbReference>
<dbReference type="BioGRID" id="63576">
    <property type="interactions" value="3"/>
</dbReference>
<dbReference type="DIP" id="DIP-19554N"/>
<dbReference type="FunCoup" id="Q9U6L5">
    <property type="interactions" value="40"/>
</dbReference>
<dbReference type="IntAct" id="Q9U6L5">
    <property type="interactions" value="6"/>
</dbReference>
<dbReference type="STRING" id="7227.FBpp0305377"/>
<dbReference type="PaxDb" id="7227-FBpp0305377"/>
<dbReference type="DNASU" id="38009"/>
<dbReference type="EnsemblMetazoa" id="FBtr0072454">
    <property type="protein sequence ID" value="FBpp0072356"/>
    <property type="gene ID" value="FBgn0004181"/>
</dbReference>
<dbReference type="EnsemblMetazoa" id="FBtr0333174">
    <property type="protein sequence ID" value="FBpp0305377"/>
    <property type="gene ID" value="FBgn0004181"/>
</dbReference>
<dbReference type="GeneID" id="38009"/>
<dbReference type="KEGG" id="dme:Dmel_CG2668"/>
<dbReference type="AGR" id="FB:FBgn0004181"/>
<dbReference type="CTD" id="10682"/>
<dbReference type="FlyBase" id="FBgn0004181">
    <property type="gene designation" value="Ebp"/>
</dbReference>
<dbReference type="VEuPathDB" id="VectorBase:FBgn0004181"/>
<dbReference type="eggNOG" id="ENOG502T8PB">
    <property type="taxonomic scope" value="Eukaryota"/>
</dbReference>
<dbReference type="HOGENOM" id="CLU_734180_0_0_1"/>
<dbReference type="InParanoid" id="Q9U6L5"/>
<dbReference type="OMA" id="IGINTPF"/>
<dbReference type="OrthoDB" id="7872944at2759"/>
<dbReference type="PhylomeDB" id="Q9U6L5"/>
<dbReference type="SignaLink" id="Q9U6L5"/>
<dbReference type="BioGRID-ORCS" id="38009">
    <property type="hits" value="0 hits in 1 CRISPR screen"/>
</dbReference>
<dbReference type="GenomeRNAi" id="38009"/>
<dbReference type="PRO" id="PR:Q9U6L5"/>
<dbReference type="Proteomes" id="UP000000803">
    <property type="component" value="Chromosome 2R"/>
</dbReference>
<dbReference type="Bgee" id="FBgn0004181">
    <property type="expression patterns" value="Expressed in spermatid in male reproductive gland and 52 other cell types or tissues"/>
</dbReference>
<dbReference type="ExpressionAtlas" id="Q9U6L5">
    <property type="expression patterns" value="baseline and differential"/>
</dbReference>
<dbReference type="GO" id="GO:0005576">
    <property type="term" value="C:extracellular region"/>
    <property type="evidence" value="ECO:0000314"/>
    <property type="project" value="UniProtKB"/>
</dbReference>
<dbReference type="GO" id="GO:0005615">
    <property type="term" value="C:extracellular space"/>
    <property type="evidence" value="ECO:0007005"/>
    <property type="project" value="FlyBase"/>
</dbReference>
<dbReference type="GO" id="GO:0042628">
    <property type="term" value="P:mating plug formation"/>
    <property type="evidence" value="ECO:0000270"/>
    <property type="project" value="UniProtKB"/>
</dbReference>
<dbReference type="GO" id="GO:0019953">
    <property type="term" value="P:sexual reproduction"/>
    <property type="evidence" value="ECO:0007007"/>
    <property type="project" value="FlyBase"/>
</dbReference>
<accession>Q9U6L5</accession>
<accession>Q9W0W1</accession>
<name>PEB1_DROME</name>
<keyword id="KW-0085">Behavior</keyword>
<keyword id="KW-0903">Direct protein sequencing</keyword>
<keyword id="KW-1185">Reference proteome</keyword>
<keyword id="KW-0964">Secreted</keyword>
<keyword id="KW-0732">Signal</keyword>
<organism evidence="5">
    <name type="scientific">Drosophila melanogaster</name>
    <name type="common">Fruit fly</name>
    <dbReference type="NCBI Taxonomy" id="7227"/>
    <lineage>
        <taxon>Eukaryota</taxon>
        <taxon>Metazoa</taxon>
        <taxon>Ecdysozoa</taxon>
        <taxon>Arthropoda</taxon>
        <taxon>Hexapoda</taxon>
        <taxon>Insecta</taxon>
        <taxon>Pterygota</taxon>
        <taxon>Neoptera</taxon>
        <taxon>Endopterygota</taxon>
        <taxon>Diptera</taxon>
        <taxon>Brachycera</taxon>
        <taxon>Muscomorpha</taxon>
        <taxon>Ephydroidea</taxon>
        <taxon>Drosophilidae</taxon>
        <taxon>Drosophila</taxon>
        <taxon>Sophophora</taxon>
    </lineage>
</organism>
<proteinExistence type="evidence at protein level"/>
<comment type="function">
    <text evidence="3">Major protein component of the posterior mating plug. Accessory gland proteins constitute, or are required for formation of the anterior mating plug. Posterior mating plug forms before sperm transfer and the anterior mating plug is formed after the start of mating.</text>
</comment>
<comment type="subcellular location">
    <subcellularLocation>
        <location evidence="3">Secreted</location>
    </subcellularLocation>
</comment>
<comment type="tissue specificity">
    <text evidence="3">Specifically expressed in the ejaculatory bulb and seminal fluid. Detected in mated females 3 minutes after the start of mating, and for at least 3 hours after the start of mating.</text>
</comment>
<evidence type="ECO:0000255" key="1"/>
<evidence type="ECO:0000256" key="2">
    <source>
        <dbReference type="SAM" id="MobiDB-lite"/>
    </source>
</evidence>
<evidence type="ECO:0000269" key="3">
    <source>
    </source>
</evidence>
<evidence type="ECO:0000305" key="4"/>
<evidence type="ECO:0000312" key="5">
    <source>
        <dbReference type="EMBL" id="AAF47319.2"/>
    </source>
</evidence>
<evidence type="ECO:0000312" key="6">
    <source>
        <dbReference type="FlyBase" id="FBgn0004181"/>
    </source>
</evidence>
<protein>
    <recommendedName>
        <fullName>Ejaculatory bulb-specific protein 1</fullName>
    </recommendedName>
    <alternativeName>
        <fullName>Ejaculatory bulb-specific protein I</fullName>
    </alternativeName>
    <alternativeName>
        <fullName>PEB-me</fullName>
    </alternativeName>
</protein>
<sequence>MVRQLILVLSLILFCGSSHAVVSELARQSESAIQGLADIKMAPLRYLDVLFGGNPGGLRGLDGGNSASLSTLQAAKVANILARGDIASSGYSKISAGVGKGSDLITIIKNTRSYDPYLIPPGIPGYNYPLGWPLRYPLGPYWPNRPPWLPINSPPIRPGGLFPGGPSPGGPSPGEPSPGEPSPGGPSPGGPSPGGPSPGGPSPGGPSPGGPSPGGPFPGGSPPSPGGPLGPWQFPWILGGPRPNRPGRPFPGGILPGHLDGSVVPNSVLNVAGGIFGNGGLFGTGIFGQHGLFGTGFLSGPSLDPFGIFTPIGNFFGSLGNLFGFSSPSQIIPIFGGKFGPLGRGLQGSITLDVGGTVPSVKGILGQLLHPFLGFLG</sequence>